<feature type="chain" id="PRO_0000392511" description="Viresin">
    <location>
        <begin position="1"/>
        <end position="44" status="greater than"/>
    </location>
</feature>
<feature type="non-terminal residue" evidence="2">
    <location>
        <position position="44"/>
    </location>
</feature>
<protein>
    <recommendedName>
        <fullName evidence="2">Viresin</fullName>
    </recommendedName>
</protein>
<evidence type="ECO:0000269" key="1">
    <source>
    </source>
</evidence>
<evidence type="ECO:0000303" key="2">
    <source>
    </source>
</evidence>
<evidence type="ECO:0000305" key="3"/>
<proteinExistence type="evidence at protein level"/>
<comment type="function">
    <text evidence="1">Has antibacterial activity against the Gram-negative bacteria E.coli and E.cloacae, but not against the Gram-negative bacteria P.aeruginosa, P.vulgaris, K.pneumoniae and S.enteritidis or the Gram-positive bacteria S.aureus, S.epidermidis and S.salivarius.</text>
</comment>
<comment type="subcellular location">
    <subcellularLocation>
        <location evidence="1">Secreted</location>
    </subcellularLocation>
</comment>
<comment type="similarity">
    <text evidence="3">Belongs to the insect A10/OS-D protein family.</text>
</comment>
<name>VIRE2_HELVI</name>
<accession>P86354</accession>
<organism>
    <name type="scientific">Heliothis virescens</name>
    <name type="common">Tobacco budworm moth</name>
    <dbReference type="NCBI Taxonomy" id="7102"/>
    <lineage>
        <taxon>Eukaryota</taxon>
        <taxon>Metazoa</taxon>
        <taxon>Ecdysozoa</taxon>
        <taxon>Arthropoda</taxon>
        <taxon>Hexapoda</taxon>
        <taxon>Insecta</taxon>
        <taxon>Pterygota</taxon>
        <taxon>Neoptera</taxon>
        <taxon>Endopterygota</taxon>
        <taxon>Lepidoptera</taxon>
        <taxon>Glossata</taxon>
        <taxon>Ditrysia</taxon>
        <taxon>Noctuoidea</taxon>
        <taxon>Noctuidae</taxon>
        <taxon>Heliothinae</taxon>
        <taxon>Heliothis</taxon>
    </lineage>
</organism>
<reference evidence="3" key="1">
    <citation type="journal article" date="2000" name="Eur. J. Biochem.">
        <title>Viresin. A novel antibacterial protein from immune hemolymph of Heliothis virescens pupae.</title>
        <authorList>
            <person name="Chung K.T."/>
            <person name="Ourth D.D."/>
        </authorList>
    </citation>
    <scope>PROTEIN SEQUENCE</scope>
    <scope>FUNCTION</scope>
    <scope>SUBCELLULAR LOCATION</scope>
    <source>
        <tissue evidence="1">Hemolymph</tissue>
    </source>
</reference>
<sequence length="44" mass="5062">YDNVNLDEILANDRLLVPYIKCLLDEGKKAPDAKELKEHIRXAL</sequence>
<dbReference type="GO" id="GO:0005576">
    <property type="term" value="C:extracellular region"/>
    <property type="evidence" value="ECO:0007669"/>
    <property type="project" value="UniProtKB-SubCell"/>
</dbReference>
<dbReference type="GO" id="GO:0042742">
    <property type="term" value="P:defense response to bacterium"/>
    <property type="evidence" value="ECO:0007669"/>
    <property type="project" value="UniProtKB-KW"/>
</dbReference>
<dbReference type="Gene3D" id="1.10.2080.10">
    <property type="entry name" value="Insect odorant-binding protein A10/Ejaculatory bulb-specific protein 3"/>
    <property type="match status" value="1"/>
</dbReference>
<dbReference type="InterPro" id="IPR005055">
    <property type="entry name" value="A10/PebIII"/>
</dbReference>
<dbReference type="InterPro" id="IPR036682">
    <property type="entry name" value="OS_D_A10/PebIII_sf"/>
</dbReference>
<dbReference type="Pfam" id="PF03392">
    <property type="entry name" value="OS-D"/>
    <property type="match status" value="1"/>
</dbReference>
<dbReference type="SUPFAM" id="SSF100910">
    <property type="entry name" value="Chemosensory protein Csp2"/>
    <property type="match status" value="1"/>
</dbReference>
<keyword id="KW-0044">Antibiotic</keyword>
<keyword id="KW-0929">Antimicrobial</keyword>
<keyword id="KW-0903">Direct protein sequencing</keyword>
<keyword id="KW-0964">Secreted</keyword>